<keyword id="KW-0963">Cytoplasm</keyword>
<keyword id="KW-0342">GTP-binding</keyword>
<keyword id="KW-0460">Magnesium</keyword>
<keyword id="KW-0479">Metal-binding</keyword>
<keyword id="KW-0501">Molybdenum cofactor biosynthesis</keyword>
<keyword id="KW-0547">Nucleotide-binding</keyword>
<keyword id="KW-1185">Reference proteome</keyword>
<keyword id="KW-0808">Transferase</keyword>
<accession>B9MA54</accession>
<comment type="function">
    <text evidence="1">Transfers a GMP moiety from GTP to Mo-molybdopterin (Mo-MPT) cofactor (Moco or molybdenum cofactor) to form Mo-molybdopterin guanine dinucleotide (Mo-MGD) cofactor.</text>
</comment>
<comment type="catalytic activity">
    <reaction evidence="1">
        <text>Mo-molybdopterin + GTP + H(+) = Mo-molybdopterin guanine dinucleotide + diphosphate</text>
        <dbReference type="Rhea" id="RHEA:34243"/>
        <dbReference type="ChEBI" id="CHEBI:15378"/>
        <dbReference type="ChEBI" id="CHEBI:33019"/>
        <dbReference type="ChEBI" id="CHEBI:37565"/>
        <dbReference type="ChEBI" id="CHEBI:71302"/>
        <dbReference type="ChEBI" id="CHEBI:71310"/>
        <dbReference type="EC" id="2.7.7.77"/>
    </reaction>
</comment>
<comment type="cofactor">
    <cofactor evidence="1">
        <name>Mg(2+)</name>
        <dbReference type="ChEBI" id="CHEBI:18420"/>
    </cofactor>
</comment>
<comment type="subunit">
    <text evidence="1">Monomer.</text>
</comment>
<comment type="subcellular location">
    <subcellularLocation>
        <location evidence="1">Cytoplasm</location>
    </subcellularLocation>
</comment>
<comment type="domain">
    <text evidence="1">The N-terminal domain determines nucleotide recognition and specific binding, while the C-terminal domain determines the specific binding to the target protein.</text>
</comment>
<comment type="similarity">
    <text evidence="1">Belongs to the MobA family.</text>
</comment>
<sequence>MIDTHDITGLILAGGRGSRMGGVDKGLQNFRGLPLALHTLMRLQPQVGDVMINANRNLAAYESFGVPVWPDGLADYAGPLAGFLTGLERCETPWLLTVPCDTPLFPPDLAARLAQAATREGADIAMAAAPEADERDGTVRVRTQPVFCLLRVTLLESLVRFTQGGGRKIDRWTEQHACAVVAFDQPGDDPHAFYNANTLAELHALEGLGHR</sequence>
<protein>
    <recommendedName>
        <fullName evidence="1">Molybdenum cofactor guanylyltransferase</fullName>
        <shortName evidence="1">MoCo guanylyltransferase</shortName>
        <ecNumber evidence="1">2.7.7.77</ecNumber>
    </recommendedName>
    <alternativeName>
        <fullName evidence="1">GTP:molybdopterin guanylyltransferase</fullName>
    </alternativeName>
    <alternativeName>
        <fullName evidence="1">Mo-MPT guanylyltransferase</fullName>
    </alternativeName>
    <alternativeName>
        <fullName evidence="1">Molybdopterin guanylyltransferase</fullName>
    </alternativeName>
    <alternativeName>
        <fullName evidence="1">Molybdopterin-guanine dinucleotide synthase</fullName>
        <shortName evidence="1">MGD synthase</shortName>
    </alternativeName>
</protein>
<feature type="chain" id="PRO_1000132958" description="Molybdenum cofactor guanylyltransferase">
    <location>
        <begin position="1"/>
        <end position="211"/>
    </location>
</feature>
<feature type="binding site" evidence="1">
    <location>
        <begin position="12"/>
        <end position="14"/>
    </location>
    <ligand>
        <name>GTP</name>
        <dbReference type="ChEBI" id="CHEBI:37565"/>
    </ligand>
</feature>
<feature type="binding site" evidence="1">
    <location>
        <position position="25"/>
    </location>
    <ligand>
        <name>GTP</name>
        <dbReference type="ChEBI" id="CHEBI:37565"/>
    </ligand>
</feature>
<feature type="binding site" evidence="1">
    <location>
        <position position="53"/>
    </location>
    <ligand>
        <name>GTP</name>
        <dbReference type="ChEBI" id="CHEBI:37565"/>
    </ligand>
</feature>
<feature type="binding site" evidence="1">
    <location>
        <position position="71"/>
    </location>
    <ligand>
        <name>GTP</name>
        <dbReference type="ChEBI" id="CHEBI:37565"/>
    </ligand>
</feature>
<feature type="binding site" evidence="1">
    <location>
        <position position="101"/>
    </location>
    <ligand>
        <name>GTP</name>
        <dbReference type="ChEBI" id="CHEBI:37565"/>
    </ligand>
</feature>
<feature type="binding site" evidence="1">
    <location>
        <position position="101"/>
    </location>
    <ligand>
        <name>Mg(2+)</name>
        <dbReference type="ChEBI" id="CHEBI:18420"/>
    </ligand>
</feature>
<reference key="1">
    <citation type="submission" date="2009-01" db="EMBL/GenBank/DDBJ databases">
        <title>Complete sequence of Diaphorobacter sp. TPSY.</title>
        <authorList>
            <consortium name="US DOE Joint Genome Institute"/>
            <person name="Lucas S."/>
            <person name="Copeland A."/>
            <person name="Lapidus A."/>
            <person name="Glavina del Rio T."/>
            <person name="Tice H."/>
            <person name="Bruce D."/>
            <person name="Goodwin L."/>
            <person name="Pitluck S."/>
            <person name="Chertkov O."/>
            <person name="Brettin T."/>
            <person name="Detter J.C."/>
            <person name="Han C."/>
            <person name="Larimer F."/>
            <person name="Land M."/>
            <person name="Hauser L."/>
            <person name="Kyrpides N."/>
            <person name="Mikhailova N."/>
            <person name="Coates J.D."/>
        </authorList>
    </citation>
    <scope>NUCLEOTIDE SEQUENCE [LARGE SCALE GENOMIC DNA]</scope>
    <source>
        <strain>TPSY</strain>
    </source>
</reference>
<proteinExistence type="inferred from homology"/>
<dbReference type="EC" id="2.7.7.77" evidence="1"/>
<dbReference type="EMBL" id="CP001392">
    <property type="protein sequence ID" value="ACM33426.1"/>
    <property type="molecule type" value="Genomic_DNA"/>
</dbReference>
<dbReference type="RefSeq" id="WP_015913471.1">
    <property type="nucleotide sequence ID" value="NC_011992.1"/>
</dbReference>
<dbReference type="SMR" id="B9MA54"/>
<dbReference type="KEGG" id="dia:Dtpsy_1970"/>
<dbReference type="eggNOG" id="COG0746">
    <property type="taxonomic scope" value="Bacteria"/>
</dbReference>
<dbReference type="HOGENOM" id="CLU_055597_5_1_4"/>
<dbReference type="Proteomes" id="UP000000450">
    <property type="component" value="Chromosome"/>
</dbReference>
<dbReference type="GO" id="GO:0005737">
    <property type="term" value="C:cytoplasm"/>
    <property type="evidence" value="ECO:0007669"/>
    <property type="project" value="UniProtKB-SubCell"/>
</dbReference>
<dbReference type="GO" id="GO:0005525">
    <property type="term" value="F:GTP binding"/>
    <property type="evidence" value="ECO:0007669"/>
    <property type="project" value="UniProtKB-UniRule"/>
</dbReference>
<dbReference type="GO" id="GO:0046872">
    <property type="term" value="F:metal ion binding"/>
    <property type="evidence" value="ECO:0007669"/>
    <property type="project" value="UniProtKB-KW"/>
</dbReference>
<dbReference type="GO" id="GO:0061603">
    <property type="term" value="F:molybdenum cofactor guanylyltransferase activity"/>
    <property type="evidence" value="ECO:0007669"/>
    <property type="project" value="UniProtKB-EC"/>
</dbReference>
<dbReference type="GO" id="GO:1902758">
    <property type="term" value="P:bis(molybdopterin guanine dinucleotide)molybdenum biosynthetic process"/>
    <property type="evidence" value="ECO:0007669"/>
    <property type="project" value="TreeGrafter"/>
</dbReference>
<dbReference type="CDD" id="cd02503">
    <property type="entry name" value="MobA"/>
    <property type="match status" value="1"/>
</dbReference>
<dbReference type="Gene3D" id="3.90.550.10">
    <property type="entry name" value="Spore Coat Polysaccharide Biosynthesis Protein SpsA, Chain A"/>
    <property type="match status" value="1"/>
</dbReference>
<dbReference type="HAMAP" id="MF_00316">
    <property type="entry name" value="MobA"/>
    <property type="match status" value="1"/>
</dbReference>
<dbReference type="InterPro" id="IPR025877">
    <property type="entry name" value="MobA-like_NTP_Trfase"/>
</dbReference>
<dbReference type="InterPro" id="IPR013482">
    <property type="entry name" value="Molybde_CF_guanTrfase"/>
</dbReference>
<dbReference type="InterPro" id="IPR029044">
    <property type="entry name" value="Nucleotide-diphossugar_trans"/>
</dbReference>
<dbReference type="NCBIfam" id="TIGR02665">
    <property type="entry name" value="molyb_mobA"/>
    <property type="match status" value="1"/>
</dbReference>
<dbReference type="PANTHER" id="PTHR19136">
    <property type="entry name" value="MOLYBDENUM COFACTOR GUANYLYLTRANSFERASE"/>
    <property type="match status" value="1"/>
</dbReference>
<dbReference type="PANTHER" id="PTHR19136:SF81">
    <property type="entry name" value="MOLYBDENUM COFACTOR GUANYLYLTRANSFERASE"/>
    <property type="match status" value="1"/>
</dbReference>
<dbReference type="Pfam" id="PF12804">
    <property type="entry name" value="NTP_transf_3"/>
    <property type="match status" value="1"/>
</dbReference>
<dbReference type="SUPFAM" id="SSF53448">
    <property type="entry name" value="Nucleotide-diphospho-sugar transferases"/>
    <property type="match status" value="1"/>
</dbReference>
<organism>
    <name type="scientific">Acidovorax ebreus (strain TPSY)</name>
    <name type="common">Diaphorobacter sp. (strain TPSY)</name>
    <dbReference type="NCBI Taxonomy" id="535289"/>
    <lineage>
        <taxon>Bacteria</taxon>
        <taxon>Pseudomonadati</taxon>
        <taxon>Pseudomonadota</taxon>
        <taxon>Betaproteobacteria</taxon>
        <taxon>Burkholderiales</taxon>
        <taxon>Comamonadaceae</taxon>
        <taxon>Diaphorobacter</taxon>
    </lineage>
</organism>
<name>MOBA_ACIET</name>
<gene>
    <name evidence="1" type="primary">mobA</name>
    <name type="ordered locus">Dtpsy_1970</name>
</gene>
<evidence type="ECO:0000255" key="1">
    <source>
        <dbReference type="HAMAP-Rule" id="MF_00316"/>
    </source>
</evidence>